<accession>Q9EPS2</accession>
<accession>Q91XD0</accession>
<proteinExistence type="inferred from homology"/>
<feature type="signal peptide" evidence="1">
    <location>
        <begin position="1"/>
        <end position="28"/>
    </location>
</feature>
<feature type="peptide" id="PRO_0000025387" description="Peptide YY">
    <location>
        <begin position="29"/>
        <end position="64"/>
    </location>
</feature>
<feature type="peptide" id="PRO_0000430664" description="Peptide YY(3-36)" evidence="2">
    <location>
        <begin position="31"/>
        <end position="64"/>
    </location>
</feature>
<feature type="propeptide" id="PRO_0000025388">
    <location>
        <begin position="68"/>
        <end position="98"/>
    </location>
</feature>
<feature type="site" description="Cleavage; by FAP" evidence="2">
    <location>
        <begin position="30"/>
        <end position="31"/>
    </location>
</feature>
<feature type="modified residue" description="Phosphoserine" evidence="3">
    <location>
        <position position="41"/>
    </location>
</feature>
<feature type="modified residue" description="Tyrosine amide" evidence="1">
    <location>
        <position position="64"/>
    </location>
</feature>
<feature type="sequence conflict" description="In Ref. 2." evidence="5" ref="2">
    <original>PE</original>
    <variation>SR</variation>
    <location>
        <begin position="92"/>
        <end position="93"/>
    </location>
</feature>
<keyword id="KW-0027">Amidation</keyword>
<keyword id="KW-0165">Cleavage on pair of basic residues</keyword>
<keyword id="KW-0372">Hormone</keyword>
<keyword id="KW-0597">Phosphoprotein</keyword>
<keyword id="KW-1185">Reference proteome</keyword>
<keyword id="KW-0964">Secreted</keyword>
<keyword id="KW-0732">Signal</keyword>
<gene>
    <name type="primary">Pyy</name>
</gene>
<reference key="1">
    <citation type="journal article" date="2004" name="Genome Res.">
        <title>The status, quality, and expansion of the NIH full-length cDNA project: the Mammalian Gene Collection (MGC).</title>
        <authorList>
            <consortium name="The MGC Project Team"/>
        </authorList>
    </citation>
    <scope>NUCLEOTIDE SEQUENCE [LARGE SCALE MRNA]</scope>
    <source>
        <tissue>Colon</tissue>
    </source>
</reference>
<reference key="2">
    <citation type="submission" date="2000-12" db="EMBL/GenBank/DDBJ databases">
        <title>Mouse PYY promoter.</title>
        <authorList>
            <person name="Brown G.J."/>
            <person name="James R."/>
            <person name="Eddie L.W."/>
        </authorList>
    </citation>
    <scope>NUCLEOTIDE SEQUENCE [GENOMIC DNA] OF 1-93</scope>
    <source>
        <strain>BALB/cJ</strain>
        <tissue>Liver</tissue>
    </source>
</reference>
<dbReference type="EMBL" id="BC010821">
    <property type="protein sequence ID" value="AAH10821.1"/>
    <property type="molecule type" value="mRNA"/>
</dbReference>
<dbReference type="EMBL" id="AF325866">
    <property type="protein sequence ID" value="AAG42908.1"/>
    <property type="molecule type" value="Genomic_DNA"/>
</dbReference>
<dbReference type="CCDS" id="CCDS36339.1"/>
<dbReference type="RefSeq" id="NP_663410.1">
    <property type="nucleotide sequence ID" value="NM_145435.1"/>
</dbReference>
<dbReference type="BMRB" id="Q9EPS2"/>
<dbReference type="FunCoup" id="Q9EPS2">
    <property type="interactions" value="805"/>
</dbReference>
<dbReference type="STRING" id="10090.ENSMUSP00000135292"/>
<dbReference type="PaxDb" id="10090-ENSMUSP00000017455"/>
<dbReference type="ProteomicsDB" id="301856"/>
<dbReference type="Antibodypedia" id="3390">
    <property type="antibodies" value="458 antibodies from 31 providers"/>
</dbReference>
<dbReference type="DNASU" id="217212"/>
<dbReference type="Ensembl" id="ENSMUST00000017455.15">
    <property type="protein sequence ID" value="ENSMUSP00000017455.9"/>
    <property type="gene ID" value="ENSMUSG00000017311.16"/>
</dbReference>
<dbReference type="GeneID" id="217212"/>
<dbReference type="KEGG" id="mmu:217212"/>
<dbReference type="UCSC" id="uc007lqo.2">
    <property type="organism name" value="mouse"/>
</dbReference>
<dbReference type="AGR" id="MGI:99924"/>
<dbReference type="CTD" id="5697"/>
<dbReference type="MGI" id="MGI:99924">
    <property type="gene designation" value="Pyy"/>
</dbReference>
<dbReference type="VEuPathDB" id="HostDB:ENSMUSG00000017311"/>
<dbReference type="eggNOG" id="ENOG502S267">
    <property type="taxonomic scope" value="Eukaryota"/>
</dbReference>
<dbReference type="GeneTree" id="ENSGT00940000160643"/>
<dbReference type="InParanoid" id="Q9EPS2"/>
<dbReference type="OrthoDB" id="9852947at2759"/>
<dbReference type="PhylomeDB" id="Q9EPS2"/>
<dbReference type="TreeFam" id="TF332778"/>
<dbReference type="Reactome" id="R-MMU-375276">
    <property type="pathway name" value="Peptide ligand-binding receptors"/>
</dbReference>
<dbReference type="Reactome" id="R-MMU-418594">
    <property type="pathway name" value="G alpha (i) signalling events"/>
</dbReference>
<dbReference type="BioGRID-ORCS" id="217212">
    <property type="hits" value="1 hit in 61 CRISPR screens"/>
</dbReference>
<dbReference type="PRO" id="PR:Q9EPS2"/>
<dbReference type="Proteomes" id="UP000000589">
    <property type="component" value="Chromosome 11"/>
</dbReference>
<dbReference type="RNAct" id="Q9EPS2">
    <property type="molecule type" value="protein"/>
</dbReference>
<dbReference type="Bgee" id="ENSMUSG00000017311">
    <property type="expression patterns" value="Expressed in dorsal pancreas and 49 other cell types or tissues"/>
</dbReference>
<dbReference type="ExpressionAtlas" id="Q9EPS2">
    <property type="expression patterns" value="baseline and differential"/>
</dbReference>
<dbReference type="GO" id="GO:0005615">
    <property type="term" value="C:extracellular space"/>
    <property type="evidence" value="ECO:0000314"/>
    <property type="project" value="MGI"/>
</dbReference>
<dbReference type="GO" id="GO:0005184">
    <property type="term" value="F:neuropeptide hormone activity"/>
    <property type="evidence" value="ECO:0000314"/>
    <property type="project" value="MGI"/>
</dbReference>
<dbReference type="GO" id="GO:0042755">
    <property type="term" value="P:eating behavior"/>
    <property type="evidence" value="ECO:0000314"/>
    <property type="project" value="MGI"/>
</dbReference>
<dbReference type="CDD" id="cd00126">
    <property type="entry name" value="PAH"/>
    <property type="match status" value="1"/>
</dbReference>
<dbReference type="Gene3D" id="6.10.250.900">
    <property type="match status" value="1"/>
</dbReference>
<dbReference type="InterPro" id="IPR001955">
    <property type="entry name" value="Pancreatic_hormone-like"/>
</dbReference>
<dbReference type="InterPro" id="IPR020392">
    <property type="entry name" value="Pancreatic_hormone-like_CS"/>
</dbReference>
<dbReference type="PANTHER" id="PTHR10533">
    <property type="entry name" value="NEUROPEPTIDE Y/PANCREATIC HORMONE/PEPTIDE YY"/>
    <property type="match status" value="1"/>
</dbReference>
<dbReference type="PANTHER" id="PTHR10533:SF14">
    <property type="entry name" value="PEPTIDE YY-RELATED"/>
    <property type="match status" value="1"/>
</dbReference>
<dbReference type="Pfam" id="PF00159">
    <property type="entry name" value="Hormone_3"/>
    <property type="match status" value="1"/>
</dbReference>
<dbReference type="PRINTS" id="PR00278">
    <property type="entry name" value="PANCHORMONE"/>
</dbReference>
<dbReference type="SMART" id="SM00309">
    <property type="entry name" value="PAH"/>
    <property type="match status" value="1"/>
</dbReference>
<dbReference type="PROSITE" id="PS00265">
    <property type="entry name" value="PANCREATIC_HORMONE_1"/>
    <property type="match status" value="1"/>
</dbReference>
<dbReference type="PROSITE" id="PS50276">
    <property type="entry name" value="PANCREATIC_HORMONE_2"/>
    <property type="match status" value="1"/>
</dbReference>
<organism>
    <name type="scientific">Mus musculus</name>
    <name type="common">Mouse</name>
    <dbReference type="NCBI Taxonomy" id="10090"/>
    <lineage>
        <taxon>Eukaryota</taxon>
        <taxon>Metazoa</taxon>
        <taxon>Chordata</taxon>
        <taxon>Craniata</taxon>
        <taxon>Vertebrata</taxon>
        <taxon>Euteleostomi</taxon>
        <taxon>Mammalia</taxon>
        <taxon>Eutheria</taxon>
        <taxon>Euarchontoglires</taxon>
        <taxon>Glires</taxon>
        <taxon>Rodentia</taxon>
        <taxon>Myomorpha</taxon>
        <taxon>Muroidea</taxon>
        <taxon>Muridae</taxon>
        <taxon>Murinae</taxon>
        <taxon>Mus</taxon>
        <taxon>Mus</taxon>
    </lineage>
</organism>
<protein>
    <recommendedName>
        <fullName evidence="4">Peptide YY</fullName>
        <shortName evidence="4">PYY</shortName>
    </recommendedName>
    <alternativeName>
        <fullName>Peptide tyrosine tyrosine</fullName>
    </alternativeName>
    <component>
        <recommendedName>
            <fullName evidence="4">Peptide YY(3-36)</fullName>
        </recommendedName>
        <alternativeName>
            <fullName evidence="4">PYY-II</fullName>
        </alternativeName>
    </component>
</protein>
<name>PYY_MOUSE</name>
<evidence type="ECO:0000250" key="1"/>
<evidence type="ECO:0000250" key="2">
    <source>
        <dbReference type="UniProtKB" id="P10082"/>
    </source>
</evidence>
<evidence type="ECO:0000250" key="3">
    <source>
        <dbReference type="UniProtKB" id="P68005"/>
    </source>
</evidence>
<evidence type="ECO:0000250" key="4">
    <source>
        <dbReference type="UniProtKB" id="Q9TR93"/>
    </source>
</evidence>
<evidence type="ECO:0000305" key="5"/>
<comment type="function">
    <text>This gut peptide inhibits exocrine pancreatic secretion, has a vasoconstrictory action and inhibitis jejunal and colonic mobility.</text>
</comment>
<comment type="subcellular location">
    <subcellularLocation>
        <location>Secreted</location>
    </subcellularLocation>
</comment>
<comment type="PTM">
    <text evidence="2">The peptide YY form is cleaved at Pro-30 by the prolyl endopeptidase FAP (seprase) activity (in vitro) to generate peptide YY(3-36).</text>
</comment>
<comment type="similarity">
    <text evidence="5">Belongs to the NPY family.</text>
</comment>
<sequence>MVAVRRPWPVTVAMLLILLACLGALVDAYPAKPEAPGEDASPEELSRYYASLRHYLNLVTRQRYGKRDVPAALFSKLLFTDDSDSENLPFRPEGLDQW</sequence>